<name>PDXS_THEKO</name>
<protein>
    <recommendedName>
        <fullName evidence="1">Pyridoxal 5'-phosphate synthase subunit PdxS</fullName>
        <shortName evidence="1">PLP synthase subunit PdxS</shortName>
        <ecNumber evidence="1">4.3.3.6</ecNumber>
    </recommendedName>
    <alternativeName>
        <fullName evidence="1">Pdx1</fullName>
    </alternativeName>
</protein>
<organism>
    <name type="scientific">Thermococcus kodakarensis (strain ATCC BAA-918 / JCM 12380 / KOD1)</name>
    <name type="common">Pyrococcus kodakaraensis (strain KOD1)</name>
    <dbReference type="NCBI Taxonomy" id="69014"/>
    <lineage>
        <taxon>Archaea</taxon>
        <taxon>Methanobacteriati</taxon>
        <taxon>Methanobacteriota</taxon>
        <taxon>Thermococci</taxon>
        <taxon>Thermococcales</taxon>
        <taxon>Thermococcaceae</taxon>
        <taxon>Thermococcus</taxon>
    </lineage>
</organism>
<evidence type="ECO:0000255" key="1">
    <source>
        <dbReference type="HAMAP-Rule" id="MF_01824"/>
    </source>
</evidence>
<keyword id="KW-0456">Lyase</keyword>
<keyword id="KW-0663">Pyridoxal phosphate</keyword>
<keyword id="KW-1185">Reference proteome</keyword>
<keyword id="KW-0704">Schiff base</keyword>
<comment type="function">
    <text evidence="1">Catalyzes the formation of pyridoxal 5'-phosphate from ribose 5-phosphate (RBP), glyceraldehyde 3-phosphate (G3P) and ammonia. The ammonia is provided by the PdxT subunit. Can also use ribulose 5-phosphate and dihydroxyacetone phosphate as substrates, resulting from enzyme-catalyzed isomerization of RBP and G3P, respectively.</text>
</comment>
<comment type="catalytic activity">
    <reaction evidence="1">
        <text>aldehydo-D-ribose 5-phosphate + D-glyceraldehyde 3-phosphate + L-glutamine = pyridoxal 5'-phosphate + L-glutamate + phosphate + 3 H2O + H(+)</text>
        <dbReference type="Rhea" id="RHEA:31507"/>
        <dbReference type="ChEBI" id="CHEBI:15377"/>
        <dbReference type="ChEBI" id="CHEBI:15378"/>
        <dbReference type="ChEBI" id="CHEBI:29985"/>
        <dbReference type="ChEBI" id="CHEBI:43474"/>
        <dbReference type="ChEBI" id="CHEBI:58273"/>
        <dbReference type="ChEBI" id="CHEBI:58359"/>
        <dbReference type="ChEBI" id="CHEBI:59776"/>
        <dbReference type="ChEBI" id="CHEBI:597326"/>
        <dbReference type="EC" id="4.3.3.6"/>
    </reaction>
</comment>
<comment type="pathway">
    <text evidence="1">Cofactor biosynthesis; pyridoxal 5'-phosphate biosynthesis.</text>
</comment>
<comment type="subunit">
    <text evidence="1">In the presence of PdxT, forms a dodecamer of heterodimers.</text>
</comment>
<comment type="similarity">
    <text evidence="1">Belongs to the PdxS/SNZ family.</text>
</comment>
<dbReference type="EC" id="4.3.3.6" evidence="1"/>
<dbReference type="EMBL" id="AP006878">
    <property type="protein sequence ID" value="BAD84406.1"/>
    <property type="molecule type" value="Genomic_DNA"/>
</dbReference>
<dbReference type="RefSeq" id="WP_011249172.1">
    <property type="nucleotide sequence ID" value="NC_006624.1"/>
</dbReference>
<dbReference type="SMR" id="Q5JFR1"/>
<dbReference type="FunCoup" id="Q5JFR1">
    <property type="interactions" value="124"/>
</dbReference>
<dbReference type="IntAct" id="Q5JFR1">
    <property type="interactions" value="1"/>
</dbReference>
<dbReference type="MINT" id="Q5JFR1"/>
<dbReference type="STRING" id="69014.TK0217"/>
<dbReference type="EnsemblBacteria" id="BAD84406">
    <property type="protein sequence ID" value="BAD84406"/>
    <property type="gene ID" value="TK0217"/>
</dbReference>
<dbReference type="GeneID" id="78446721"/>
<dbReference type="KEGG" id="tko:TK0217"/>
<dbReference type="PATRIC" id="fig|69014.16.peg.216"/>
<dbReference type="eggNOG" id="arCOG04075">
    <property type="taxonomic scope" value="Archaea"/>
</dbReference>
<dbReference type="HOGENOM" id="CLU_055352_1_0_2"/>
<dbReference type="InParanoid" id="Q5JFR1"/>
<dbReference type="OrthoDB" id="6840at2157"/>
<dbReference type="PhylomeDB" id="Q5JFR1"/>
<dbReference type="UniPathway" id="UPA00245"/>
<dbReference type="Proteomes" id="UP000000536">
    <property type="component" value="Chromosome"/>
</dbReference>
<dbReference type="GO" id="GO:0016843">
    <property type="term" value="F:amine-lyase activity"/>
    <property type="evidence" value="ECO:0000318"/>
    <property type="project" value="GO_Central"/>
</dbReference>
<dbReference type="GO" id="GO:0036381">
    <property type="term" value="F:pyridoxal 5'-phosphate synthase (glutamine hydrolysing) activity"/>
    <property type="evidence" value="ECO:0007669"/>
    <property type="project" value="UniProtKB-UniRule"/>
</dbReference>
<dbReference type="GO" id="GO:0006520">
    <property type="term" value="P:amino acid metabolic process"/>
    <property type="evidence" value="ECO:0000318"/>
    <property type="project" value="GO_Central"/>
</dbReference>
<dbReference type="GO" id="GO:0042823">
    <property type="term" value="P:pyridoxal phosphate biosynthetic process"/>
    <property type="evidence" value="ECO:0000318"/>
    <property type="project" value="GO_Central"/>
</dbReference>
<dbReference type="GO" id="GO:0008615">
    <property type="term" value="P:pyridoxine biosynthetic process"/>
    <property type="evidence" value="ECO:0000318"/>
    <property type="project" value="GO_Central"/>
</dbReference>
<dbReference type="CDD" id="cd04727">
    <property type="entry name" value="pdxS"/>
    <property type="match status" value="1"/>
</dbReference>
<dbReference type="FunFam" id="3.20.20.70:FF:000406">
    <property type="entry name" value="Pyridoxal 5'-phosphate synthase subunit PdxS"/>
    <property type="match status" value="1"/>
</dbReference>
<dbReference type="Gene3D" id="3.20.20.70">
    <property type="entry name" value="Aldolase class I"/>
    <property type="match status" value="1"/>
</dbReference>
<dbReference type="HAMAP" id="MF_01824">
    <property type="entry name" value="PdxS"/>
    <property type="match status" value="1"/>
</dbReference>
<dbReference type="InterPro" id="IPR013785">
    <property type="entry name" value="Aldolase_TIM"/>
</dbReference>
<dbReference type="InterPro" id="IPR001852">
    <property type="entry name" value="PdxS/SNZ"/>
</dbReference>
<dbReference type="InterPro" id="IPR033755">
    <property type="entry name" value="PdxS/SNZ_N"/>
</dbReference>
<dbReference type="InterPro" id="IPR011060">
    <property type="entry name" value="RibuloseP-bd_barrel"/>
</dbReference>
<dbReference type="InterPro" id="IPR033983">
    <property type="entry name" value="Thiazole_synthase_ThiG"/>
</dbReference>
<dbReference type="NCBIfam" id="NF003215">
    <property type="entry name" value="PRK04180.1"/>
    <property type="match status" value="1"/>
</dbReference>
<dbReference type="NCBIfam" id="TIGR00343">
    <property type="entry name" value="pyridoxal 5'-phosphate synthase lyase subunit PdxS"/>
    <property type="match status" value="1"/>
</dbReference>
<dbReference type="PANTHER" id="PTHR31829">
    <property type="entry name" value="PYRIDOXAL 5'-PHOSPHATE SYNTHASE SUBUNIT SNZ1-RELATED"/>
    <property type="match status" value="1"/>
</dbReference>
<dbReference type="PANTHER" id="PTHR31829:SF0">
    <property type="entry name" value="PYRIDOXAL 5'-PHOSPHATE SYNTHASE SUBUNIT SNZ1-RELATED"/>
    <property type="match status" value="1"/>
</dbReference>
<dbReference type="Pfam" id="PF01680">
    <property type="entry name" value="SOR_SNZ"/>
    <property type="match status" value="1"/>
</dbReference>
<dbReference type="Pfam" id="PF05690">
    <property type="entry name" value="ThiG"/>
    <property type="match status" value="1"/>
</dbReference>
<dbReference type="PIRSF" id="PIRSF029271">
    <property type="entry name" value="Pdx1"/>
    <property type="match status" value="1"/>
</dbReference>
<dbReference type="SUPFAM" id="SSF51366">
    <property type="entry name" value="Ribulose-phoshate binding barrel"/>
    <property type="match status" value="1"/>
</dbReference>
<dbReference type="PROSITE" id="PS01235">
    <property type="entry name" value="PDXS_SNZ_1"/>
    <property type="match status" value="1"/>
</dbReference>
<dbReference type="PROSITE" id="PS51129">
    <property type="entry name" value="PDXS_SNZ_2"/>
    <property type="match status" value="1"/>
</dbReference>
<accession>Q5JFR1</accession>
<gene>
    <name evidence="1" type="primary">pdxS</name>
    <name type="ordered locus">TK0217</name>
</gene>
<reference key="1">
    <citation type="journal article" date="2005" name="Genome Res.">
        <title>Complete genome sequence of the hyperthermophilic archaeon Thermococcus kodakaraensis KOD1 and comparison with Pyrococcus genomes.</title>
        <authorList>
            <person name="Fukui T."/>
            <person name="Atomi H."/>
            <person name="Kanai T."/>
            <person name="Matsumi R."/>
            <person name="Fujiwara S."/>
            <person name="Imanaka T."/>
        </authorList>
    </citation>
    <scope>NUCLEOTIDE SEQUENCE [LARGE SCALE GENOMIC DNA]</scope>
    <source>
        <strain>ATCC BAA-918 / JCM 12380 / KOD1</strain>
    </source>
</reference>
<feature type="chain" id="PRO_0000109446" description="Pyridoxal 5'-phosphate synthase subunit PdxS">
    <location>
        <begin position="1"/>
        <end position="335"/>
    </location>
</feature>
<feature type="active site" description="Schiff-base intermediate with D-ribose 5-phosphate" evidence="1">
    <location>
        <position position="87"/>
    </location>
</feature>
<feature type="binding site" evidence="1">
    <location>
        <position position="30"/>
    </location>
    <ligand>
        <name>D-ribose 5-phosphate</name>
        <dbReference type="ChEBI" id="CHEBI:78346"/>
    </ligand>
</feature>
<feature type="binding site" evidence="1">
    <location>
        <position position="159"/>
    </location>
    <ligand>
        <name>D-ribose 5-phosphate</name>
        <dbReference type="ChEBI" id="CHEBI:78346"/>
    </ligand>
</feature>
<feature type="binding site" evidence="1">
    <location>
        <position position="171"/>
    </location>
    <ligand>
        <name>D-glyceraldehyde 3-phosphate</name>
        <dbReference type="ChEBI" id="CHEBI:59776"/>
    </ligand>
</feature>
<feature type="binding site" evidence="1">
    <location>
        <position position="257"/>
    </location>
    <ligand>
        <name>D-ribose 5-phosphate</name>
        <dbReference type="ChEBI" id="CHEBI:78346"/>
    </ligand>
</feature>
<feature type="binding site" evidence="1">
    <location>
        <begin position="278"/>
        <end position="279"/>
    </location>
    <ligand>
        <name>D-ribose 5-phosphate</name>
        <dbReference type="ChEBI" id="CHEBI:78346"/>
    </ligand>
</feature>
<proteinExistence type="inferred from homology"/>
<sequence length="335" mass="36663">MGKLDVIQAKGTERLKRGFAKMVKGGVIMDVTNAEQARIAEEAGAVSVMALHRVPADIRKAGGVARMAPIEKIQEIMDAVTIPVMAKVRIGHVAEAKILEALGVDMIDESEVLTPSDPFFHIDKREFTVPFVCGARNLGEAVRRIWEGAAMIRTKGEAGTGNIVEAVRHVRLVAEGIRQIQAMTDDQVYAVAEKFAEPYLRLSLNVKEIAGLPQRVLDNEPIYGHYTYREIVDGLYKILLEIKKLGRLPVVNFAAGGVATPADAALMMQMGMDGVFVGSGIFKSSNPPKMAKAIVEAVNHWDEPDVLVEISKEIGEPMRGQDIEELEVRLEERGV</sequence>